<protein>
    <recommendedName>
        <fullName evidence="1">Photosystem I reaction center subunit IV</fullName>
    </recommendedName>
</protein>
<comment type="function">
    <text evidence="1">Stabilizes the interaction between PsaC and the PSI core, assists the docking of the ferredoxin to PSI and interacts with ferredoxin-NADP oxidoreductase.</text>
</comment>
<comment type="subcellular location">
    <subcellularLocation>
        <location evidence="1">Cellular thylakoid membrane</location>
        <topology evidence="1">Peripheral membrane protein</topology>
    </subcellularLocation>
</comment>
<comment type="similarity">
    <text evidence="1">Belongs to the PsaE family.</text>
</comment>
<gene>
    <name evidence="1" type="primary">psaE</name>
    <name type="ordered locus">Npun_R3937</name>
</gene>
<organism>
    <name type="scientific">Nostoc punctiforme (strain ATCC 29133 / PCC 73102)</name>
    <dbReference type="NCBI Taxonomy" id="63737"/>
    <lineage>
        <taxon>Bacteria</taxon>
        <taxon>Bacillati</taxon>
        <taxon>Cyanobacteriota</taxon>
        <taxon>Cyanophyceae</taxon>
        <taxon>Nostocales</taxon>
        <taxon>Nostocaceae</taxon>
        <taxon>Nostoc</taxon>
    </lineage>
</organism>
<name>PSAE_NOSP7</name>
<evidence type="ECO:0000255" key="1">
    <source>
        <dbReference type="HAMAP-Rule" id="MF_00613"/>
    </source>
</evidence>
<proteinExistence type="inferred from homology"/>
<feature type="chain" id="PRO_1000130400" description="Photosystem I reaction center subunit IV">
    <location>
        <begin position="1"/>
        <end position="71"/>
    </location>
</feature>
<dbReference type="EMBL" id="CP001037">
    <property type="protein sequence ID" value="ACC82318.1"/>
    <property type="molecule type" value="Genomic_DNA"/>
</dbReference>
<dbReference type="RefSeq" id="WP_012410286.1">
    <property type="nucleotide sequence ID" value="NC_010628.1"/>
</dbReference>
<dbReference type="SMR" id="B2J5G1"/>
<dbReference type="STRING" id="63737.Npun_R3937"/>
<dbReference type="EnsemblBacteria" id="ACC82318">
    <property type="protein sequence ID" value="ACC82318"/>
    <property type="gene ID" value="Npun_R3937"/>
</dbReference>
<dbReference type="KEGG" id="npu:Npun_R3937"/>
<dbReference type="eggNOG" id="ENOG503313D">
    <property type="taxonomic scope" value="Bacteria"/>
</dbReference>
<dbReference type="HOGENOM" id="CLU_136462_2_1_3"/>
<dbReference type="OrthoDB" id="427926at2"/>
<dbReference type="PhylomeDB" id="B2J5G1"/>
<dbReference type="Proteomes" id="UP000001191">
    <property type="component" value="Chromosome"/>
</dbReference>
<dbReference type="GO" id="GO:0009538">
    <property type="term" value="C:photosystem I reaction center"/>
    <property type="evidence" value="ECO:0007669"/>
    <property type="project" value="InterPro"/>
</dbReference>
<dbReference type="GO" id="GO:0031676">
    <property type="term" value="C:plasma membrane-derived thylakoid membrane"/>
    <property type="evidence" value="ECO:0007669"/>
    <property type="project" value="UniProtKB-SubCell"/>
</dbReference>
<dbReference type="GO" id="GO:0015979">
    <property type="term" value="P:photosynthesis"/>
    <property type="evidence" value="ECO:0007669"/>
    <property type="project" value="UniProtKB-UniRule"/>
</dbReference>
<dbReference type="Gene3D" id="2.30.30.50">
    <property type="match status" value="1"/>
</dbReference>
<dbReference type="HAMAP" id="MF_00613">
    <property type="entry name" value="PSI_PsaE"/>
    <property type="match status" value="1"/>
</dbReference>
<dbReference type="InterPro" id="IPR008990">
    <property type="entry name" value="Elect_transpt_acc-like_dom_sf"/>
</dbReference>
<dbReference type="InterPro" id="IPR003375">
    <property type="entry name" value="PSI_PsaE"/>
</dbReference>
<dbReference type="NCBIfam" id="NF002745">
    <property type="entry name" value="PRK02749.1"/>
    <property type="match status" value="1"/>
</dbReference>
<dbReference type="PANTHER" id="PTHR34549">
    <property type="entry name" value="PHOTOSYSTEM I REACTION CENTER SUBUNIT IV A, CHLOROPLASTIC-RELATED"/>
    <property type="match status" value="1"/>
</dbReference>
<dbReference type="PANTHER" id="PTHR34549:SF2">
    <property type="entry name" value="PHOTOSYSTEM I SUBUNIT IV"/>
    <property type="match status" value="1"/>
</dbReference>
<dbReference type="Pfam" id="PF02427">
    <property type="entry name" value="PSI_PsaE"/>
    <property type="match status" value="1"/>
</dbReference>
<dbReference type="SUPFAM" id="SSF50090">
    <property type="entry name" value="Electron transport accessory proteins"/>
    <property type="match status" value="1"/>
</dbReference>
<reference key="1">
    <citation type="journal article" date="2013" name="Plant Physiol.">
        <title>A Nostoc punctiforme Sugar Transporter Necessary to Establish a Cyanobacterium-Plant Symbiosis.</title>
        <authorList>
            <person name="Ekman M."/>
            <person name="Picossi S."/>
            <person name="Campbell E.L."/>
            <person name="Meeks J.C."/>
            <person name="Flores E."/>
        </authorList>
    </citation>
    <scope>NUCLEOTIDE SEQUENCE [LARGE SCALE GENOMIC DNA]</scope>
    <source>
        <strain>ATCC 29133 / PCC 73102</strain>
    </source>
</reference>
<keyword id="KW-0472">Membrane</keyword>
<keyword id="KW-0602">Photosynthesis</keyword>
<keyword id="KW-0603">Photosystem I</keyword>
<keyword id="KW-1185">Reference proteome</keyword>
<keyword id="KW-0793">Thylakoid</keyword>
<accession>B2J5G1</accession>
<sequence length="71" mass="8056">MVQRGSKVRILRPESYWFQDLGTVASIDQSGIKYPVIVRFEKVNYSGINTNNFAQDELVEVEAPKAKPAKK</sequence>